<name>TTK_MOUSE</name>
<keyword id="KW-0007">Acetylation</keyword>
<keyword id="KW-0025">Alternative splicing</keyword>
<keyword id="KW-0067">ATP-binding</keyword>
<keyword id="KW-0418">Kinase</keyword>
<keyword id="KW-0547">Nucleotide-binding</keyword>
<keyword id="KW-0597">Phosphoprotein</keyword>
<keyword id="KW-1185">Reference proteome</keyword>
<keyword id="KW-0723">Serine/threonine-protein kinase</keyword>
<keyword id="KW-0808">Transferase</keyword>
<keyword id="KW-0829">Tyrosine-protein kinase</keyword>
<comment type="function">
    <text evidence="2">Involved in mitotic spindle assembly checkpoint signaling, a process that delays anaphase until chromosomes are bioriented on the spindle, and in the repair of incorrect mitotic kinetochore-spindle microtubule attachments. Phosphorylates MAD1L1 to promote the mitotic spindle assembly checkpoint. Phosphorylates CDCA8/Borealin leading to enhanced AURKB activity at the kinetochore. Phosphorylates SKA3 at 'Ser-34' leading to dissociation of the SKA complex from microtubules and destabilization of microtubule-kinetochore attachments. Phosphorylates KNL1, KNTC1 and autophosphorylates. Phosphorylates MCRS1 which enhances recruitment of KIF2A to the minus end of spindle microtubules and promotes chromosome alignment.</text>
</comment>
<comment type="catalytic activity">
    <reaction evidence="2">
        <text>L-seryl-[protein] + ATP = O-phospho-L-seryl-[protein] + ADP + H(+)</text>
        <dbReference type="Rhea" id="RHEA:17989"/>
        <dbReference type="Rhea" id="RHEA-COMP:9863"/>
        <dbReference type="Rhea" id="RHEA-COMP:11604"/>
        <dbReference type="ChEBI" id="CHEBI:15378"/>
        <dbReference type="ChEBI" id="CHEBI:29999"/>
        <dbReference type="ChEBI" id="CHEBI:30616"/>
        <dbReference type="ChEBI" id="CHEBI:83421"/>
        <dbReference type="ChEBI" id="CHEBI:456216"/>
        <dbReference type="EC" id="2.7.12.1"/>
    </reaction>
</comment>
<comment type="catalytic activity">
    <reaction evidence="2">
        <text>L-threonyl-[protein] + ATP = O-phospho-L-threonyl-[protein] + ADP + H(+)</text>
        <dbReference type="Rhea" id="RHEA:46608"/>
        <dbReference type="Rhea" id="RHEA-COMP:11060"/>
        <dbReference type="Rhea" id="RHEA-COMP:11605"/>
        <dbReference type="ChEBI" id="CHEBI:15378"/>
        <dbReference type="ChEBI" id="CHEBI:30013"/>
        <dbReference type="ChEBI" id="CHEBI:30616"/>
        <dbReference type="ChEBI" id="CHEBI:61977"/>
        <dbReference type="ChEBI" id="CHEBI:456216"/>
        <dbReference type="EC" id="2.7.12.1"/>
    </reaction>
</comment>
<comment type="catalytic activity">
    <reaction evidence="2">
        <text>L-tyrosyl-[protein] + ATP = O-phospho-L-tyrosyl-[protein] + ADP + H(+)</text>
        <dbReference type="Rhea" id="RHEA:10596"/>
        <dbReference type="Rhea" id="RHEA-COMP:10136"/>
        <dbReference type="Rhea" id="RHEA-COMP:20101"/>
        <dbReference type="ChEBI" id="CHEBI:15378"/>
        <dbReference type="ChEBI" id="CHEBI:30616"/>
        <dbReference type="ChEBI" id="CHEBI:46858"/>
        <dbReference type="ChEBI" id="CHEBI:61978"/>
        <dbReference type="ChEBI" id="CHEBI:456216"/>
        <dbReference type="EC" id="2.7.12.1"/>
    </reaction>
</comment>
<comment type="activity regulation">
    <text evidence="1">Inhibited by the ATP-competitive kinase inhibitor, SP600125.</text>
</comment>
<comment type="subunit">
    <text evidence="2">Interacts with TPR; the interactions occurs in a microtubule-independent manner (By similarity). Interacts with MAD1L1 and MAD2L1 (By similarity).</text>
</comment>
<comment type="alternative products">
    <event type="alternative splicing"/>
    <isoform>
        <id>P35761-1</id>
        <name>1</name>
        <sequence type="displayed"/>
    </isoform>
    <isoform>
        <id>P35761-2</id>
        <name>2</name>
        <sequence type="described" ref="VSP_004875"/>
    </isoform>
</comment>
<comment type="tissue specificity">
    <text>Present in rapidly proliferating cell lines; high levels in testis, bone marrow, spleen and thymus. Low levels in brain, heart, lung and kidney.</text>
</comment>
<comment type="PTM">
    <text>Autophosphorylated.</text>
</comment>
<comment type="similarity">
    <text evidence="3">Belongs to the protein kinase superfamily. Ser/Thr protein kinase family.</text>
</comment>
<protein>
    <recommendedName>
        <fullName>Dual specificity protein kinase TTK</fullName>
        <ecNumber evidence="2">2.7.12.1</ecNumber>
    </recommendedName>
    <alternativeName>
        <fullName>ESK</fullName>
    </alternativeName>
    <alternativeName>
        <fullName>PYT</fullName>
    </alternativeName>
</protein>
<sequence length="856" mass="96211">MEAEELIGSSVTIDSIMSKMRDIKNKINEDCTDELSLSKICADHTETVNQIMRVGNTPENWLNFLLKLEKNSSPLNDDLLNKLIGRYSQAIEVLPPDKYGQNESFARIQVRLAELKAIQEPDDARDYFQMARENCKKFAFVHVSFAQFELSQGNLKKSEQLLHKAVETGAVPLQMLETAMRNLHLQKKQLLPEEDKKSVSASTVLSAQEPFSSSLGNVQNRSISCESRGQAGAARVLYGENLPPQDAEVRHQNPFKQTHAAKRSCPFGRVPVNLLNSPDFYVKTDSSAVTQLTTRLALSSVPLPYVTCLLHLQLLALAGLAKGSGPDRDAILPGSRPRGSDSYELRGLKPIQTIYLKDSLVSNEKSSELMSDLIALKSKTDSSLTKLEETKPEIAERRPMQWQSTRKPECVFQNPAAFAPLRHVPDVTPKADKESPPISVPKWLDPKSACETPSSSSLDDYMKCFKTPVVKNDFPPACPSSTPYSQLARLQQQQQQGLSTPLQSLQISGSSSINECISVNGRIYSILKQIGSGGSSKVFQVLNEKKQINAIKYVNLEDADSQTIESYRNEIAFLNKLQQHSDKIIRLYDYEITEQYIYMVMECGNIDLNSWLKKKKSINPWERKSYWKNMLEAVHIIHQHGIVHSDLKPANFVIVDGMLKLIDFGIANQMQPDTTSIVKDSQVGTVNYMAPEAIRDMSSSRENSKIRTKVSPRSDVWSLGCILYYMTYGRTPFQHIINQVSKLHAIINPAHEIEFPEISEKDLRDVLKCCLVRNPKERISIPELLTHPYVQIQPHPGSQMARGATDEMKYVLGQLVGLNSPNSILKTAKTLYERYNCGEGQDSSSSKTFDKKRERK</sequence>
<proteinExistence type="evidence at protein level"/>
<reference key="1">
    <citation type="journal article" date="1992" name="Mol. Cell. Biol.">
        <title>Multiple cDNAs encoding the esk kinase predict transmembrane and intracellular enzyme isoforms.</title>
        <authorList>
            <person name="Douville E.M.J."/>
            <person name="Afar D.E.H."/>
            <person name="Howell B.W."/>
            <person name="Letwin K."/>
            <person name="Tannock L."/>
            <person name="Ben-David Y."/>
            <person name="Pawson T."/>
            <person name="Bell J.C."/>
        </authorList>
    </citation>
    <scope>NUCLEOTIDE SEQUENCE [MRNA] (ISOFORMS 1 AND 2)</scope>
</reference>
<reference key="2">
    <citation type="journal article" date="2010" name="Cell">
        <title>A tissue-specific atlas of mouse protein phosphorylation and expression.</title>
        <authorList>
            <person name="Huttlin E.L."/>
            <person name="Jedrychowski M.P."/>
            <person name="Elias J.E."/>
            <person name="Goswami T."/>
            <person name="Rad R."/>
            <person name="Beausoleil S.A."/>
            <person name="Villen J."/>
            <person name="Haas W."/>
            <person name="Sowa M.E."/>
            <person name="Gygi S.P."/>
        </authorList>
    </citation>
    <scope>IDENTIFICATION BY MASS SPECTROMETRY [LARGE SCALE ANALYSIS]</scope>
    <source>
        <tissue>Testis</tissue>
    </source>
</reference>
<evidence type="ECO:0000250" key="1"/>
<evidence type="ECO:0000250" key="2">
    <source>
        <dbReference type="UniProtKB" id="P33981"/>
    </source>
</evidence>
<evidence type="ECO:0000255" key="3">
    <source>
        <dbReference type="PROSITE-ProRule" id="PRU00159"/>
    </source>
</evidence>
<evidence type="ECO:0000255" key="4">
    <source>
        <dbReference type="PROSITE-ProRule" id="PRU10027"/>
    </source>
</evidence>
<evidence type="ECO:0000256" key="5">
    <source>
        <dbReference type="SAM" id="MobiDB-lite"/>
    </source>
</evidence>
<evidence type="ECO:0000303" key="6">
    <source>
    </source>
</evidence>
<dbReference type="EC" id="2.7.12.1" evidence="2"/>
<dbReference type="EMBL" id="M86377">
    <property type="protein sequence ID" value="AAA37578.1"/>
    <property type="molecule type" value="mRNA"/>
</dbReference>
<dbReference type="CCDS" id="CCDS52874.1">
    <molecule id="P35761-2"/>
</dbReference>
<dbReference type="PIR" id="A44439">
    <property type="entry name" value="A44439"/>
</dbReference>
<dbReference type="PIR" id="B44439">
    <property type="entry name" value="B44439"/>
</dbReference>
<dbReference type="RefSeq" id="NP_033471.2">
    <molecule id="P35761-2"/>
    <property type="nucleotide sequence ID" value="NM_009445.3"/>
</dbReference>
<dbReference type="SMR" id="P35761"/>
<dbReference type="FunCoup" id="P35761">
    <property type="interactions" value="1557"/>
</dbReference>
<dbReference type="IntAct" id="P35761">
    <property type="interactions" value="4"/>
</dbReference>
<dbReference type="STRING" id="10090.ENSMUSP00000064839"/>
<dbReference type="iPTMnet" id="P35761"/>
<dbReference type="PhosphoSitePlus" id="P35761"/>
<dbReference type="SwissPalm" id="P35761"/>
<dbReference type="jPOST" id="P35761"/>
<dbReference type="PaxDb" id="10090-ENSMUSP00000064839"/>
<dbReference type="PeptideAtlas" id="P35761"/>
<dbReference type="ProteomicsDB" id="298012">
    <molecule id="P35761-1"/>
</dbReference>
<dbReference type="ProteomicsDB" id="298013">
    <molecule id="P35761-2"/>
</dbReference>
<dbReference type="Pumba" id="P35761"/>
<dbReference type="Antibodypedia" id="4121">
    <property type="antibodies" value="482 antibodies from 35 providers"/>
</dbReference>
<dbReference type="Ensembl" id="ENSMUST00000070326.14">
    <molecule id="P35761-2"/>
    <property type="protein sequence ID" value="ENSMUSP00000064839.8"/>
    <property type="gene ID" value="ENSMUSG00000038379.16"/>
</dbReference>
<dbReference type="UCSC" id="uc009qwo.2">
    <molecule id="P35761-2"/>
    <property type="organism name" value="mouse"/>
</dbReference>
<dbReference type="AGR" id="MGI:1194921"/>
<dbReference type="MGI" id="MGI:1194921">
    <property type="gene designation" value="Ttk"/>
</dbReference>
<dbReference type="VEuPathDB" id="HostDB:ENSMUSG00000038379"/>
<dbReference type="eggNOG" id="KOG0596">
    <property type="taxonomic scope" value="Eukaryota"/>
</dbReference>
<dbReference type="GeneTree" id="ENSGT00950000182984"/>
<dbReference type="HOGENOM" id="CLU_010380_0_0_1"/>
<dbReference type="InParanoid" id="P35761"/>
<dbReference type="OMA" id="PISTPKW"/>
<dbReference type="PhylomeDB" id="P35761"/>
<dbReference type="TreeFam" id="TF105420"/>
<dbReference type="BRENDA" id="2.7.12.1">
    <property type="organism ID" value="3474"/>
</dbReference>
<dbReference type="CD-CODE" id="01CA17F3">
    <property type="entry name" value="Centrosome"/>
</dbReference>
<dbReference type="ChiTaRS" id="Ttk">
    <property type="organism name" value="mouse"/>
</dbReference>
<dbReference type="PRO" id="PR:P35761"/>
<dbReference type="Proteomes" id="UP000000589">
    <property type="component" value="Chromosome 9"/>
</dbReference>
<dbReference type="RNAct" id="P35761">
    <property type="molecule type" value="protein"/>
</dbReference>
<dbReference type="Bgee" id="ENSMUSG00000038379">
    <property type="expression patterns" value="Expressed in animal zygote and 155 other cell types or tissues"/>
</dbReference>
<dbReference type="ExpressionAtlas" id="P35761">
    <property type="expression patterns" value="baseline and differential"/>
</dbReference>
<dbReference type="GO" id="GO:0005737">
    <property type="term" value="C:cytoplasm"/>
    <property type="evidence" value="ECO:0007669"/>
    <property type="project" value="Ensembl"/>
</dbReference>
<dbReference type="GO" id="GO:0000776">
    <property type="term" value="C:kinetochore"/>
    <property type="evidence" value="ECO:0000314"/>
    <property type="project" value="MGI"/>
</dbReference>
<dbReference type="GO" id="GO:0016020">
    <property type="term" value="C:membrane"/>
    <property type="evidence" value="ECO:0000255"/>
    <property type="project" value="MGI"/>
</dbReference>
<dbReference type="GO" id="GO:0005524">
    <property type="term" value="F:ATP binding"/>
    <property type="evidence" value="ECO:0007669"/>
    <property type="project" value="UniProtKB-KW"/>
</dbReference>
<dbReference type="GO" id="GO:0042802">
    <property type="term" value="F:identical protein binding"/>
    <property type="evidence" value="ECO:0000353"/>
    <property type="project" value="MGI"/>
</dbReference>
<dbReference type="GO" id="GO:0043515">
    <property type="term" value="F:kinetochore binding"/>
    <property type="evidence" value="ECO:0000315"/>
    <property type="project" value="MGI"/>
</dbReference>
<dbReference type="GO" id="GO:0106310">
    <property type="term" value="F:protein serine kinase activity"/>
    <property type="evidence" value="ECO:0007669"/>
    <property type="project" value="RHEA"/>
</dbReference>
<dbReference type="GO" id="GO:0004674">
    <property type="term" value="F:protein serine/threonine kinase activity"/>
    <property type="evidence" value="ECO:0007669"/>
    <property type="project" value="UniProtKB-KW"/>
</dbReference>
<dbReference type="GO" id="GO:0004712">
    <property type="term" value="F:protein serine/threonine/tyrosine kinase activity"/>
    <property type="evidence" value="ECO:0000314"/>
    <property type="project" value="MGI"/>
</dbReference>
<dbReference type="GO" id="GO:0004713">
    <property type="term" value="F:protein tyrosine kinase activity"/>
    <property type="evidence" value="ECO:0007669"/>
    <property type="project" value="UniProtKB-KW"/>
</dbReference>
<dbReference type="GO" id="GO:0016321">
    <property type="term" value="P:female meiosis chromosome segregation"/>
    <property type="evidence" value="ECO:0000315"/>
    <property type="project" value="MGI"/>
</dbReference>
<dbReference type="GO" id="GO:0033316">
    <property type="term" value="P:meiotic spindle assembly checkpoint signaling"/>
    <property type="evidence" value="ECO:0000315"/>
    <property type="project" value="MGI"/>
</dbReference>
<dbReference type="GO" id="GO:0007094">
    <property type="term" value="P:mitotic spindle assembly checkpoint signaling"/>
    <property type="evidence" value="ECO:0000315"/>
    <property type="project" value="MGI"/>
</dbReference>
<dbReference type="GO" id="GO:0034502">
    <property type="term" value="P:protein localization to chromosome"/>
    <property type="evidence" value="ECO:0000315"/>
    <property type="project" value="MGI"/>
</dbReference>
<dbReference type="GO" id="GO:0034501">
    <property type="term" value="P:protein localization to kinetochore"/>
    <property type="evidence" value="ECO:0000315"/>
    <property type="project" value="MGI"/>
</dbReference>
<dbReference type="GO" id="GO:1903096">
    <property type="term" value="P:protein localization to meiotic spindle midzone"/>
    <property type="evidence" value="ECO:0000315"/>
    <property type="project" value="MGI"/>
</dbReference>
<dbReference type="GO" id="GO:0140273">
    <property type="term" value="P:repair of mitotic kinetochore microtubule attachment defect"/>
    <property type="evidence" value="ECO:0007669"/>
    <property type="project" value="Ensembl"/>
</dbReference>
<dbReference type="CDD" id="cd14131">
    <property type="entry name" value="PKc_Mps1"/>
    <property type="match status" value="1"/>
</dbReference>
<dbReference type="FunFam" id="1.10.510.10:FF:000308">
    <property type="entry name" value="Dual specificity protein kinase TTK"/>
    <property type="match status" value="1"/>
</dbReference>
<dbReference type="FunFam" id="1.25.40.10:FF:000101">
    <property type="entry name" value="Dual specificity protein kinase TTK"/>
    <property type="match status" value="1"/>
</dbReference>
<dbReference type="FunFam" id="3.30.200.20:FF:000131">
    <property type="entry name" value="Dual specificity protein kinase TTK"/>
    <property type="match status" value="1"/>
</dbReference>
<dbReference type="Gene3D" id="3.30.200.20">
    <property type="entry name" value="Phosphorylase Kinase, domain 1"/>
    <property type="match status" value="1"/>
</dbReference>
<dbReference type="Gene3D" id="1.25.40.10">
    <property type="entry name" value="Tetratricopeptide repeat domain"/>
    <property type="match status" value="1"/>
</dbReference>
<dbReference type="Gene3D" id="1.10.510.10">
    <property type="entry name" value="Transferase(Phosphotransferase) domain 1"/>
    <property type="match status" value="1"/>
</dbReference>
<dbReference type="InterPro" id="IPR011009">
    <property type="entry name" value="Kinase-like_dom_sf"/>
</dbReference>
<dbReference type="InterPro" id="IPR027084">
    <property type="entry name" value="Mps1_cat"/>
</dbReference>
<dbReference type="InterPro" id="IPR000719">
    <property type="entry name" value="Prot_kinase_dom"/>
</dbReference>
<dbReference type="InterPro" id="IPR008271">
    <property type="entry name" value="Ser/Thr_kinase_AS"/>
</dbReference>
<dbReference type="InterPro" id="IPR011990">
    <property type="entry name" value="TPR-like_helical_dom_sf"/>
</dbReference>
<dbReference type="PANTHER" id="PTHR22974:SF21">
    <property type="entry name" value="DUAL SPECIFICITY PROTEIN KINASE TTK"/>
    <property type="match status" value="1"/>
</dbReference>
<dbReference type="PANTHER" id="PTHR22974">
    <property type="entry name" value="MIXED LINEAGE PROTEIN KINASE"/>
    <property type="match status" value="1"/>
</dbReference>
<dbReference type="Pfam" id="PF00069">
    <property type="entry name" value="Pkinase"/>
    <property type="match status" value="1"/>
</dbReference>
<dbReference type="SMART" id="SM00220">
    <property type="entry name" value="S_TKc"/>
    <property type="match status" value="1"/>
</dbReference>
<dbReference type="SUPFAM" id="SSF56112">
    <property type="entry name" value="Protein kinase-like (PK-like)"/>
    <property type="match status" value="1"/>
</dbReference>
<dbReference type="SUPFAM" id="SSF48452">
    <property type="entry name" value="TPR-like"/>
    <property type="match status" value="1"/>
</dbReference>
<dbReference type="PROSITE" id="PS50011">
    <property type="entry name" value="PROTEIN_KINASE_DOM"/>
    <property type="match status" value="1"/>
</dbReference>
<dbReference type="PROSITE" id="PS00108">
    <property type="entry name" value="PROTEIN_KINASE_ST"/>
    <property type="match status" value="1"/>
</dbReference>
<organism>
    <name type="scientific">Mus musculus</name>
    <name type="common">Mouse</name>
    <dbReference type="NCBI Taxonomy" id="10090"/>
    <lineage>
        <taxon>Eukaryota</taxon>
        <taxon>Metazoa</taxon>
        <taxon>Chordata</taxon>
        <taxon>Craniata</taxon>
        <taxon>Vertebrata</taxon>
        <taxon>Euteleostomi</taxon>
        <taxon>Mammalia</taxon>
        <taxon>Eutheria</taxon>
        <taxon>Euarchontoglires</taxon>
        <taxon>Glires</taxon>
        <taxon>Rodentia</taxon>
        <taxon>Myomorpha</taxon>
        <taxon>Muroidea</taxon>
        <taxon>Muridae</taxon>
        <taxon>Murinae</taxon>
        <taxon>Mus</taxon>
        <taxon>Mus</taxon>
    </lineage>
</organism>
<feature type="chain" id="PRO_0000086775" description="Dual specificity protein kinase TTK">
    <location>
        <begin position="1"/>
        <end position="856"/>
    </location>
</feature>
<feature type="domain" description="Protein kinase" evidence="3">
    <location>
        <begin position="524"/>
        <end position="790"/>
    </location>
</feature>
<feature type="region of interest" description="Disordered" evidence="5">
    <location>
        <begin position="837"/>
        <end position="856"/>
    </location>
</feature>
<feature type="active site" description="Proton acceptor" evidence="3 4">
    <location>
        <position position="646"/>
    </location>
</feature>
<feature type="binding site" evidence="3">
    <location>
        <begin position="530"/>
        <end position="538"/>
    </location>
    <ligand>
        <name>ATP</name>
        <dbReference type="ChEBI" id="CHEBI:30616"/>
    </ligand>
</feature>
<feature type="binding site" evidence="3">
    <location>
        <position position="552"/>
    </location>
    <ligand>
        <name>ATP</name>
        <dbReference type="ChEBI" id="CHEBI:30616"/>
    </ligand>
</feature>
<feature type="modified residue" description="N-acetylmethionine" evidence="2">
    <location>
        <position position="1"/>
    </location>
</feature>
<feature type="modified residue" description="Phosphothreonine" evidence="2">
    <location>
        <position position="32"/>
    </location>
</feature>
<feature type="modified residue" description="Phosphoserine" evidence="2">
    <location>
        <position position="36"/>
    </location>
</feature>
<feature type="modified residue" description="Phosphoserine" evidence="2">
    <location>
        <position position="277"/>
    </location>
</feature>
<feature type="modified residue" description="Phosphoserine" evidence="2">
    <location>
        <position position="342"/>
    </location>
</feature>
<feature type="modified residue" description="Phosphothreonine" evidence="2">
    <location>
        <position position="380"/>
    </location>
</feature>
<feature type="modified residue" description="Phosphoserine" evidence="2">
    <location>
        <position position="383"/>
    </location>
</feature>
<feature type="modified residue" description="Phosphoserine" evidence="2">
    <location>
        <position position="435"/>
    </location>
</feature>
<feature type="modified residue" description="Phosphoserine" evidence="2">
    <location>
        <position position="454"/>
    </location>
</feature>
<feature type="modified residue" description="Phosphoserine" evidence="2">
    <location>
        <position position="820"/>
    </location>
</feature>
<feature type="splice variant" id="VSP_004875" description="In isoform 2." evidence="6">
    <location>
        <begin position="296"/>
        <end position="321"/>
    </location>
</feature>
<gene>
    <name type="primary">Ttk</name>
    <name type="synonym">Esk</name>
</gene>
<accession>P35761</accession>